<name>BIT2_YEAST</name>
<comment type="subunit">
    <text evidence="2 3">Interacts with the target of rapamycin complex 2 (TORC2) subunit TSC11 and the TORC2 effectors SLM1 and SLM2.</text>
</comment>
<gene>
    <name type="primary">BIT2</name>
    <name type="ordered locus">YBR270C</name>
    <name type="ORF">YBR1738</name>
</gene>
<dbReference type="EMBL" id="Z36139">
    <property type="protein sequence ID" value="CAA85233.1"/>
    <property type="molecule type" value="Genomic_DNA"/>
</dbReference>
<dbReference type="EMBL" id="BK006936">
    <property type="protein sequence ID" value="DAA07386.2"/>
    <property type="molecule type" value="Genomic_DNA"/>
</dbReference>
<dbReference type="PIR" id="S46151">
    <property type="entry name" value="S46151"/>
</dbReference>
<dbReference type="RefSeq" id="NP_009829.2">
    <property type="nucleotide sequence ID" value="NM_001178618.2"/>
</dbReference>
<dbReference type="BioGRID" id="32965">
    <property type="interactions" value="99"/>
</dbReference>
<dbReference type="DIP" id="DIP-1443N"/>
<dbReference type="FunCoup" id="P38346">
    <property type="interactions" value="33"/>
</dbReference>
<dbReference type="IntAct" id="P38346">
    <property type="interactions" value="20"/>
</dbReference>
<dbReference type="MINT" id="P38346"/>
<dbReference type="STRING" id="4932.YBR270C"/>
<dbReference type="GlyGen" id="P38346">
    <property type="glycosylation" value="2 sites, 1 O-linked glycan (2 sites)"/>
</dbReference>
<dbReference type="iPTMnet" id="P38346"/>
<dbReference type="PaxDb" id="4932-YBR270C"/>
<dbReference type="PeptideAtlas" id="P38346"/>
<dbReference type="EnsemblFungi" id="YBR270C_mRNA">
    <property type="protein sequence ID" value="YBR270C"/>
    <property type="gene ID" value="YBR270C"/>
</dbReference>
<dbReference type="GeneID" id="852573"/>
<dbReference type="KEGG" id="sce:YBR270C"/>
<dbReference type="AGR" id="SGD:S000000474"/>
<dbReference type="SGD" id="S000000474">
    <property type="gene designation" value="BIT2"/>
</dbReference>
<dbReference type="VEuPathDB" id="FungiDB:YBR270C"/>
<dbReference type="eggNOG" id="ENOG502RZ40">
    <property type="taxonomic scope" value="Eukaryota"/>
</dbReference>
<dbReference type="GeneTree" id="ENSGT00940000176511"/>
<dbReference type="HOGENOM" id="CLU_037144_0_0_1"/>
<dbReference type="InParanoid" id="P38346"/>
<dbReference type="OMA" id="WSQVGFQ"/>
<dbReference type="OrthoDB" id="2290221at2759"/>
<dbReference type="BioCyc" id="YEAST:G3O-29191-MONOMER"/>
<dbReference type="Reactome" id="R-SCE-1257604">
    <property type="pathway name" value="PIP3 activates AKT signaling"/>
</dbReference>
<dbReference type="Reactome" id="R-SCE-389357">
    <property type="pathway name" value="CD28 dependent PI3K/Akt signaling"/>
</dbReference>
<dbReference type="Reactome" id="R-SCE-5218920">
    <property type="pathway name" value="VEGFR2 mediated vascular permeability"/>
</dbReference>
<dbReference type="Reactome" id="R-SCE-6804757">
    <property type="pathway name" value="Regulation of TP53 Degradation"/>
</dbReference>
<dbReference type="Reactome" id="R-SCE-9856530">
    <property type="pathway name" value="High laminar flow shear stress activates signaling by PIEZO1 and PECAM1:CDH5:KDR in endothelial cells"/>
</dbReference>
<dbReference type="BioGRID-ORCS" id="852573">
    <property type="hits" value="0 hits in 10 CRISPR screens"/>
</dbReference>
<dbReference type="PRO" id="PR:P38346"/>
<dbReference type="Proteomes" id="UP000002311">
    <property type="component" value="Chromosome II"/>
</dbReference>
<dbReference type="RNAct" id="P38346">
    <property type="molecule type" value="protein"/>
</dbReference>
<dbReference type="GO" id="GO:0031932">
    <property type="term" value="C:TORC2 complex"/>
    <property type="evidence" value="ECO:0000314"/>
    <property type="project" value="SGD"/>
</dbReference>
<dbReference type="GO" id="GO:0038203">
    <property type="term" value="P:TORC2 signaling"/>
    <property type="evidence" value="ECO:0000318"/>
    <property type="project" value="GO_Central"/>
</dbReference>
<dbReference type="InterPro" id="IPR013745">
    <property type="entry name" value="Bit61/PRR5"/>
</dbReference>
<dbReference type="PANTHER" id="PTHR32428">
    <property type="entry name" value="TARGET OF RAPAMYCIN COMPLEX 2 SUBUNIT BIT61-RELATED"/>
    <property type="match status" value="1"/>
</dbReference>
<dbReference type="PANTHER" id="PTHR32428:SF2">
    <property type="entry name" value="TARGET OF RAPAMYCIN COMPLEX 2 SUBUNIT BIT61-RELATED"/>
    <property type="match status" value="1"/>
</dbReference>
<dbReference type="Pfam" id="PF08539">
    <property type="entry name" value="HbrB"/>
    <property type="match status" value="1"/>
</dbReference>
<accession>P38346</accession>
<accession>D6VQR6</accession>
<organism>
    <name type="scientific">Saccharomyces cerevisiae (strain ATCC 204508 / S288c)</name>
    <name type="common">Baker's yeast</name>
    <dbReference type="NCBI Taxonomy" id="559292"/>
    <lineage>
        <taxon>Eukaryota</taxon>
        <taxon>Fungi</taxon>
        <taxon>Dikarya</taxon>
        <taxon>Ascomycota</taxon>
        <taxon>Saccharomycotina</taxon>
        <taxon>Saccharomycetes</taxon>
        <taxon>Saccharomycetales</taxon>
        <taxon>Saccharomycetaceae</taxon>
        <taxon>Saccharomyces</taxon>
    </lineage>
</organism>
<sequence length="545" mass="61219">MATDLNRKRSATSGSLSVTNPNIKATNRKPARVYSVSSDIVPQALTHPDEDVHLKTSKSPHDAAPRWSQVGFQSIFHDGSNARRSTDSIEEEYSQGTENNDGHSEIGSSSSNRMEGNTTSNDSLFSSNSRGNKRRLSIFTNSKDNMRNRSRSGSKNYGTVITGTSSNNISRSGSKLFHTKSNMSVNSLQSSLSTGHSHSNKGSNVFSKMAKKLLPYKPHNSIGKDDVEPVVPSPFSKFLHSSYGKHRSPVQFIHTSTGGLIDSGKSVYSFNPSINNNPNDTALSLIQDDAFDATNVSLLHDLLKNLPSLIANYKSFTVQELFVLEGNIWGIYCSIVVELFKNKRVWQLPAKIEDIDRLLEFYITLKTQTKAAVTHSRFLAEIEEFITTSLYILENQIVFNYANEDTVNTALKRVGIIWKVFYQQVYYDMMAVLLPFEKSFQKNSNYWLDGYLSEPSRYAPSIDVLLLKCFRDSIILPYYESFLHTNDGASKSFQRYIFSEEEQNGVTEEDKLTLLQCFGILNTIKGNSRNQRIIGELLEGIRMSI</sequence>
<keyword id="KW-1185">Reference proteome</keyword>
<proteinExistence type="evidence at protein level"/>
<reference key="1">
    <citation type="journal article" date="1994" name="EMBO J.">
        <title>Complete DNA sequence of yeast chromosome II.</title>
        <authorList>
            <person name="Feldmann H."/>
            <person name="Aigle M."/>
            <person name="Aljinovic G."/>
            <person name="Andre B."/>
            <person name="Baclet M.C."/>
            <person name="Barthe C."/>
            <person name="Baur A."/>
            <person name="Becam A.-M."/>
            <person name="Biteau N."/>
            <person name="Boles E."/>
            <person name="Brandt T."/>
            <person name="Brendel M."/>
            <person name="Brueckner M."/>
            <person name="Bussereau F."/>
            <person name="Christiansen C."/>
            <person name="Contreras R."/>
            <person name="Crouzet M."/>
            <person name="Cziepluch C."/>
            <person name="Demolis N."/>
            <person name="Delaveau T."/>
            <person name="Doignon F."/>
            <person name="Domdey H."/>
            <person name="Duesterhus S."/>
            <person name="Dubois E."/>
            <person name="Dujon B."/>
            <person name="El Bakkoury M."/>
            <person name="Entian K.-D."/>
            <person name="Feuermann M."/>
            <person name="Fiers W."/>
            <person name="Fobo G.M."/>
            <person name="Fritz C."/>
            <person name="Gassenhuber J."/>
            <person name="Glansdorff N."/>
            <person name="Goffeau A."/>
            <person name="Grivell L.A."/>
            <person name="de Haan M."/>
            <person name="Hein C."/>
            <person name="Herbert C.J."/>
            <person name="Hollenberg C.P."/>
            <person name="Holmstroem K."/>
            <person name="Jacq C."/>
            <person name="Jacquet M."/>
            <person name="Jauniaux J.-C."/>
            <person name="Jonniaux J.-L."/>
            <person name="Kallesoee T."/>
            <person name="Kiesau P."/>
            <person name="Kirchrath L."/>
            <person name="Koetter P."/>
            <person name="Korol S."/>
            <person name="Liebl S."/>
            <person name="Logghe M."/>
            <person name="Lohan A.J.E."/>
            <person name="Louis E.J."/>
            <person name="Li Z.Y."/>
            <person name="Maat M.J."/>
            <person name="Mallet L."/>
            <person name="Mannhaupt G."/>
            <person name="Messenguy F."/>
            <person name="Miosga T."/>
            <person name="Molemans F."/>
            <person name="Mueller S."/>
            <person name="Nasr F."/>
            <person name="Obermaier B."/>
            <person name="Perea J."/>
            <person name="Pierard A."/>
            <person name="Piravandi E."/>
            <person name="Pohl F.M."/>
            <person name="Pohl T.M."/>
            <person name="Potier S."/>
            <person name="Proft M."/>
            <person name="Purnelle B."/>
            <person name="Ramezani Rad M."/>
            <person name="Rieger M."/>
            <person name="Rose M."/>
            <person name="Schaaff-Gerstenschlaeger I."/>
            <person name="Scherens B."/>
            <person name="Schwarzlose C."/>
            <person name="Skala J."/>
            <person name="Slonimski P.P."/>
            <person name="Smits P.H.M."/>
            <person name="Souciet J.-L."/>
            <person name="Steensma H.Y."/>
            <person name="Stucka R."/>
            <person name="Urrestarazu L.A."/>
            <person name="van der Aart Q.J.M."/>
            <person name="Van Dyck L."/>
            <person name="Vassarotti A."/>
            <person name="Vetter I."/>
            <person name="Vierendeels F."/>
            <person name="Vissers S."/>
            <person name="Wagner G."/>
            <person name="de Wergifosse P."/>
            <person name="Wolfe K.H."/>
            <person name="Zagulski M."/>
            <person name="Zimmermann F.K."/>
            <person name="Mewes H.-W."/>
            <person name="Kleine K."/>
        </authorList>
    </citation>
    <scope>NUCLEOTIDE SEQUENCE [LARGE SCALE GENOMIC DNA]</scope>
    <source>
        <strain>ATCC 204508 / S288c</strain>
    </source>
</reference>
<reference key="2">
    <citation type="journal article" date="2014" name="G3 (Bethesda)">
        <title>The reference genome sequence of Saccharomyces cerevisiae: Then and now.</title>
        <authorList>
            <person name="Engel S.R."/>
            <person name="Dietrich F.S."/>
            <person name="Fisk D.G."/>
            <person name="Binkley G."/>
            <person name="Balakrishnan R."/>
            <person name="Costanzo M.C."/>
            <person name="Dwight S.S."/>
            <person name="Hitz B.C."/>
            <person name="Karra K."/>
            <person name="Nash R.S."/>
            <person name="Weng S."/>
            <person name="Wong E.D."/>
            <person name="Lloyd P."/>
            <person name="Skrzypek M.S."/>
            <person name="Miyasato S.R."/>
            <person name="Simison M."/>
            <person name="Cherry J.M."/>
        </authorList>
    </citation>
    <scope>GENOME REANNOTATION</scope>
    <scope>SEQUENCE REVISION TO 152-152</scope>
    <source>
        <strain>ATCC 204508 / S288c</strain>
    </source>
</reference>
<reference key="3">
    <citation type="journal article" date="2001" name="Proc. Natl. Acad. Sci. U.S.A.">
        <title>A comprehensive two-hybrid analysis to explore the yeast protein interactome.</title>
        <authorList>
            <person name="Ito T."/>
            <person name="Chiba T."/>
            <person name="Ozawa R."/>
            <person name="Yoshida M."/>
            <person name="Hattori M."/>
            <person name="Sakaki Y."/>
        </authorList>
    </citation>
    <scope>INTERACTION WITH SLM1; SLM2 AND TSC11</scope>
</reference>
<reference key="4">
    <citation type="journal article" date="2005" name="Mol. Biol. Cell">
        <title>The pleckstrin homology domain proteins Slm1 and Slm2 are required for actin cytoskeleton organization in yeast and bind phosphatidylinositol-4,5-bisphosphate and TORC2.</title>
        <authorList>
            <person name="Fadri M."/>
            <person name="Daquinag A."/>
            <person name="Wang S."/>
            <person name="Xue T."/>
            <person name="Kunz J."/>
        </authorList>
    </citation>
    <scope>INTERACTION WITH SLM1 AND SLM2</scope>
</reference>
<evidence type="ECO:0000256" key="1">
    <source>
        <dbReference type="SAM" id="MobiDB-lite"/>
    </source>
</evidence>
<evidence type="ECO:0000269" key="2">
    <source>
    </source>
</evidence>
<evidence type="ECO:0000269" key="3">
    <source>
    </source>
</evidence>
<evidence type="ECO:0000305" key="4"/>
<feature type="chain" id="PRO_0000202530" description="Probable target of rapamycin complex 2 subunit BIT2">
    <location>
        <begin position="1"/>
        <end position="545"/>
    </location>
</feature>
<feature type="region of interest" description="Disordered" evidence="1">
    <location>
        <begin position="1"/>
        <end position="24"/>
    </location>
</feature>
<feature type="region of interest" description="Disordered" evidence="1">
    <location>
        <begin position="78"/>
        <end position="166"/>
    </location>
</feature>
<feature type="compositionally biased region" description="Polar residues" evidence="1">
    <location>
        <begin position="11"/>
        <end position="24"/>
    </location>
</feature>
<feature type="compositionally biased region" description="Polar residues" evidence="1">
    <location>
        <begin position="106"/>
        <end position="130"/>
    </location>
</feature>
<feature type="compositionally biased region" description="Polar residues" evidence="1">
    <location>
        <begin position="151"/>
        <end position="166"/>
    </location>
</feature>
<feature type="sequence conflict" description="In Ref. 1; CAA85233." evidence="4" ref="1">
    <original>SG</original>
    <variation>RA</variation>
    <location>
        <begin position="152"/>
        <end position="153"/>
    </location>
</feature>
<protein>
    <recommendedName>
        <fullName>Probable target of rapamycin complex 2 subunit BIT2</fullName>
        <shortName>TORC2 subunit BIT2</shortName>
    </recommendedName>
    <alternativeName>
        <fullName>Binding partner of TOR2 protein 2</fullName>
    </alternativeName>
</protein>